<proteinExistence type="evidence at transcript level"/>
<reference key="1">
    <citation type="journal article" date="2003" name="Plant Physiol.">
        <title>Molecular cloning and functional analysis of a novel type of Bowman-Birk inhibitor gene family in rice.</title>
        <authorList>
            <person name="Qu L.-J."/>
            <person name="Chen J."/>
            <person name="Liu M."/>
            <person name="Pan N."/>
            <person name="Okamoto H."/>
            <person name="Lin Z."/>
            <person name="Li C."/>
            <person name="Li D."/>
            <person name="Wang J."/>
            <person name="Zhu G."/>
            <person name="Zhao X."/>
            <person name="Chen X."/>
            <person name="Gu H."/>
            <person name="Chen Z."/>
        </authorList>
    </citation>
    <scope>NUCLEOTIDE SEQUENCE [GENOMIC DNA]</scope>
    <scope>TISSUE SPECIFICITY</scope>
    <scope>INDUCTION</scope>
    <source>
        <strain>cv. Teqing</strain>
        <tissue>Leaf</tissue>
    </source>
</reference>
<reference key="2">
    <citation type="journal article" date="2005" name="PLoS Biol.">
        <title>The genomes of Oryza sativa: a history of duplications.</title>
        <authorList>
            <person name="Yu J."/>
            <person name="Wang J."/>
            <person name="Lin W."/>
            <person name="Li S."/>
            <person name="Li H."/>
            <person name="Zhou J."/>
            <person name="Ni P."/>
            <person name="Dong W."/>
            <person name="Hu S."/>
            <person name="Zeng C."/>
            <person name="Zhang J."/>
            <person name="Zhang Y."/>
            <person name="Li R."/>
            <person name="Xu Z."/>
            <person name="Li S."/>
            <person name="Li X."/>
            <person name="Zheng H."/>
            <person name="Cong L."/>
            <person name="Lin L."/>
            <person name="Yin J."/>
            <person name="Geng J."/>
            <person name="Li G."/>
            <person name="Shi J."/>
            <person name="Liu J."/>
            <person name="Lv H."/>
            <person name="Li J."/>
            <person name="Wang J."/>
            <person name="Deng Y."/>
            <person name="Ran L."/>
            <person name="Shi X."/>
            <person name="Wang X."/>
            <person name="Wu Q."/>
            <person name="Li C."/>
            <person name="Ren X."/>
            <person name="Wang J."/>
            <person name="Wang X."/>
            <person name="Li D."/>
            <person name="Liu D."/>
            <person name="Zhang X."/>
            <person name="Ji Z."/>
            <person name="Zhao W."/>
            <person name="Sun Y."/>
            <person name="Zhang Z."/>
            <person name="Bao J."/>
            <person name="Han Y."/>
            <person name="Dong L."/>
            <person name="Ji J."/>
            <person name="Chen P."/>
            <person name="Wu S."/>
            <person name="Liu J."/>
            <person name="Xiao Y."/>
            <person name="Bu D."/>
            <person name="Tan J."/>
            <person name="Yang L."/>
            <person name="Ye C."/>
            <person name="Zhang J."/>
            <person name="Xu J."/>
            <person name="Zhou Y."/>
            <person name="Yu Y."/>
            <person name="Zhang B."/>
            <person name="Zhuang S."/>
            <person name="Wei H."/>
            <person name="Liu B."/>
            <person name="Lei M."/>
            <person name="Yu H."/>
            <person name="Li Y."/>
            <person name="Xu H."/>
            <person name="Wei S."/>
            <person name="He X."/>
            <person name="Fang L."/>
            <person name="Zhang Z."/>
            <person name="Zhang Y."/>
            <person name="Huang X."/>
            <person name="Su Z."/>
            <person name="Tong W."/>
            <person name="Li J."/>
            <person name="Tong Z."/>
            <person name="Li S."/>
            <person name="Ye J."/>
            <person name="Wang L."/>
            <person name="Fang L."/>
            <person name="Lei T."/>
            <person name="Chen C.-S."/>
            <person name="Chen H.-C."/>
            <person name="Xu Z."/>
            <person name="Li H."/>
            <person name="Huang H."/>
            <person name="Zhang F."/>
            <person name="Xu H."/>
            <person name="Li N."/>
            <person name="Zhao C."/>
            <person name="Li S."/>
            <person name="Dong L."/>
            <person name="Huang Y."/>
            <person name="Li L."/>
            <person name="Xi Y."/>
            <person name="Qi Q."/>
            <person name="Li W."/>
            <person name="Zhang B."/>
            <person name="Hu W."/>
            <person name="Zhang Y."/>
            <person name="Tian X."/>
            <person name="Jiao Y."/>
            <person name="Liang X."/>
            <person name="Jin J."/>
            <person name="Gao L."/>
            <person name="Zheng W."/>
            <person name="Hao B."/>
            <person name="Liu S.-M."/>
            <person name="Wang W."/>
            <person name="Yuan L."/>
            <person name="Cao M."/>
            <person name="McDermott J."/>
            <person name="Samudrala R."/>
            <person name="Wang J."/>
            <person name="Wong G.K.-S."/>
            <person name="Yang H."/>
        </authorList>
    </citation>
    <scope>NUCLEOTIDE SEQUENCE [LARGE SCALE GENOMIC DNA]</scope>
    <source>
        <strain>cv. 93-11</strain>
    </source>
</reference>
<feature type="signal peptide" evidence="3">
    <location>
        <begin position="1"/>
        <end position="22"/>
    </location>
</feature>
<feature type="propeptide" id="PRO_0000293077" evidence="1">
    <location>
        <begin position="23"/>
        <end position="118"/>
    </location>
</feature>
<feature type="chain" id="PRO_0000293078" description="Bowman-Birk type bran trypsin inhibitor">
    <location>
        <begin position="119"/>
        <end position="251"/>
    </location>
</feature>
<feature type="propeptide" id="PRO_0000293079" evidence="1">
    <location>
        <begin position="252"/>
        <end position="254"/>
    </location>
</feature>
<feature type="repeat">
    <location>
        <begin position="46"/>
        <end position="120"/>
    </location>
</feature>
<feature type="repeat">
    <location>
        <begin position="121"/>
        <end position="187"/>
    </location>
</feature>
<feature type="repeat">
    <location>
        <begin position="188"/>
        <end position="251"/>
    </location>
</feature>
<feature type="site" description="Reactive bond for trypsin" evidence="1">
    <location>
        <begin position="135"/>
        <end position="136"/>
    </location>
</feature>
<feature type="site" description="Reactive bond for trypsin" evidence="1">
    <location>
        <begin position="201"/>
        <end position="202"/>
    </location>
</feature>
<feature type="disulfide bond" evidence="2">
    <location>
        <begin position="51"/>
        <end position="248"/>
    </location>
</feature>
<feature type="disulfide bond" evidence="1">
    <location>
        <begin position="125"/>
        <end position="185"/>
    </location>
</feature>
<feature type="disulfide bond" evidence="1">
    <location>
        <begin position="126"/>
        <end position="143"/>
    </location>
</feature>
<feature type="disulfide bond" evidence="1">
    <location>
        <begin position="152"/>
        <end position="159"/>
    </location>
</feature>
<feature type="disulfide bond" evidence="1">
    <location>
        <begin position="156"/>
        <end position="172"/>
    </location>
</feature>
<feature type="disulfide bond" evidence="1">
    <location>
        <begin position="193"/>
        <end position="248"/>
    </location>
</feature>
<feature type="disulfide bond" evidence="2">
    <location>
        <begin position="194"/>
        <end position="209"/>
    </location>
</feature>
<feature type="disulfide bond" evidence="2">
    <location>
        <begin position="199"/>
        <end position="207"/>
    </location>
</feature>
<feature type="disulfide bond" evidence="2">
    <location>
        <begin position="216"/>
        <end position="223"/>
    </location>
</feature>
<feature type="disulfide bond" evidence="2">
    <location>
        <begin position="220"/>
        <end position="236"/>
    </location>
</feature>
<keyword id="KW-1015">Disulfide bond</keyword>
<keyword id="KW-0646">Protease inhibitor</keyword>
<keyword id="KW-1185">Reference proteome</keyword>
<keyword id="KW-0677">Repeat</keyword>
<keyword id="KW-0722">Serine protease inhibitor</keyword>
<keyword id="KW-0732">Signal</keyword>
<protein>
    <recommendedName>
        <fullName>Bowman-Birk type bran trypsin inhibitor</fullName>
    </recommendedName>
    <alternativeName>
        <fullName>OSE727A</fullName>
    </alternativeName>
    <alternativeName>
        <fullName>Protein RBBI3-3</fullName>
    </alternativeName>
    <alternativeName>
        <fullName>RBTI</fullName>
    </alternativeName>
</protein>
<comment type="tissue specificity">
    <text evidence="4">Expressed in roots, leaves and flowers.</text>
</comment>
<comment type="induction">
    <text evidence="4">By wounding.</text>
</comment>
<comment type="similarity">
    <text evidence="5">Belongs to the Bowman-Birk serine protease inhibitor family.</text>
</comment>
<comment type="sequence caution" evidence="5">
    <conflict type="erroneous initiation">
        <sequence resource="EMBL-CDS" id="EAY72346"/>
    </conflict>
</comment>
<accession>A2WK50</accession>
<accession>P07084</accession>
<accession>P93432</accession>
<accession>Q5ZCA7</accession>
<accession>Q7XZC9</accession>
<accession>Q9AWV9</accession>
<accession>Q9M3W2</accession>
<accession>Q9SAS2</accession>
<name>IBBR_ORYSI</name>
<evidence type="ECO:0000250" key="1"/>
<evidence type="ECO:0000250" key="2">
    <source>
        <dbReference type="UniProtKB" id="P80321"/>
    </source>
</evidence>
<evidence type="ECO:0000255" key="3"/>
<evidence type="ECO:0000269" key="4">
    <source>
    </source>
</evidence>
<evidence type="ECO:0000305" key="5"/>
<sequence length="254" mass="27756">MSNTTMATSTILLFLLAGLAAAHGDGDTTIRLPSDGAKASRPRAAKPWDCCDNIEISRLMIYPPLYRCNDEVKQCAAACKECVEAPGGDFNGGAFVCSDWFSTVDPGPKCTAALDGLSMERPWKCCDNIKRLPTKPDPPQWRCNDELEPSQCTAACKSCREAPGPFPGKLICEDIYWGADPGPLCTPRPWGDCCDKAFCNKMNPPTCRCMDEVKECADACKDCQRVESSEPPRYVCKDRFTGHPGPVCKPRAEN</sequence>
<gene>
    <name type="primary">RBBI3.3</name>
    <name type="ORF">OsI_000193</name>
</gene>
<dbReference type="EMBL" id="AJ277469">
    <property type="protein sequence ID" value="CAB88209.1"/>
    <property type="molecule type" value="Genomic_DNA"/>
</dbReference>
<dbReference type="EMBL" id="CM000126">
    <property type="protein sequence ID" value="EAY72346.1"/>
    <property type="status" value="ALT_INIT"/>
    <property type="molecule type" value="Genomic_DNA"/>
</dbReference>
<dbReference type="SMR" id="A2WK50"/>
<dbReference type="MEROPS" id="I12.007"/>
<dbReference type="EnsemblPlants" id="OsMH63_01G001810_01">
    <property type="protein sequence ID" value="OsMH63_01G001810_01"/>
    <property type="gene ID" value="OsMH63_01G001810"/>
</dbReference>
<dbReference type="EnsemblPlants" id="OsPr106_01g0001800.01">
    <property type="protein sequence ID" value="OsPr106_01g0001800.01"/>
    <property type="gene ID" value="OsPr106_01g0001800"/>
</dbReference>
<dbReference type="Gramene" id="OsMH63_01G001810_01">
    <property type="protein sequence ID" value="OsMH63_01G001810_01"/>
    <property type="gene ID" value="OsMH63_01G001810"/>
</dbReference>
<dbReference type="Gramene" id="OsPr106_01g0001800.01">
    <property type="protein sequence ID" value="OsPr106_01g0001800.01"/>
    <property type="gene ID" value="OsPr106_01g0001800"/>
</dbReference>
<dbReference type="HOGENOM" id="CLU_059102_0_0_1"/>
<dbReference type="Proteomes" id="UP000007015">
    <property type="component" value="Chromosome 1"/>
</dbReference>
<dbReference type="GO" id="GO:0005576">
    <property type="term" value="C:extracellular region"/>
    <property type="evidence" value="ECO:0007669"/>
    <property type="project" value="InterPro"/>
</dbReference>
<dbReference type="GO" id="GO:0004867">
    <property type="term" value="F:serine-type endopeptidase inhibitor activity"/>
    <property type="evidence" value="ECO:0007669"/>
    <property type="project" value="UniProtKB-KW"/>
</dbReference>
<dbReference type="CDD" id="cd00023">
    <property type="entry name" value="BBI"/>
    <property type="match status" value="3"/>
</dbReference>
<dbReference type="Gene3D" id="2.10.69.10">
    <property type="entry name" value="Cysteine Protease (Bromelain) Inhibitor, subunit H"/>
    <property type="match status" value="3"/>
</dbReference>
<dbReference type="InterPro" id="IPR035995">
    <property type="entry name" value="Bowman-Birk_prot_inh"/>
</dbReference>
<dbReference type="InterPro" id="IPR000877">
    <property type="entry name" value="Prot_inh_BBI"/>
</dbReference>
<dbReference type="PANTHER" id="PTHR33479">
    <property type="entry name" value="BOWMAN-BIRK TYPE BRAN TRYPSIN INHIBITOR"/>
    <property type="match status" value="1"/>
</dbReference>
<dbReference type="PANTHER" id="PTHR33479:SF22">
    <property type="entry name" value="BOWMAN-BIRK TYPE BRAN TRYPSIN INHIBITOR"/>
    <property type="match status" value="1"/>
</dbReference>
<dbReference type="Pfam" id="PF00228">
    <property type="entry name" value="Bowman-Birk_leg"/>
    <property type="match status" value="3"/>
</dbReference>
<dbReference type="SMART" id="SM00269">
    <property type="entry name" value="BowB"/>
    <property type="match status" value="3"/>
</dbReference>
<dbReference type="SUPFAM" id="SSF57247">
    <property type="entry name" value="Bowman-Birk inhibitor, BBI"/>
    <property type="match status" value="3"/>
</dbReference>
<dbReference type="PROSITE" id="PS00281">
    <property type="entry name" value="BOWMAN_BIRK"/>
    <property type="match status" value="2"/>
</dbReference>
<organism>
    <name type="scientific">Oryza sativa subsp. indica</name>
    <name type="common">Rice</name>
    <dbReference type="NCBI Taxonomy" id="39946"/>
    <lineage>
        <taxon>Eukaryota</taxon>
        <taxon>Viridiplantae</taxon>
        <taxon>Streptophyta</taxon>
        <taxon>Embryophyta</taxon>
        <taxon>Tracheophyta</taxon>
        <taxon>Spermatophyta</taxon>
        <taxon>Magnoliopsida</taxon>
        <taxon>Liliopsida</taxon>
        <taxon>Poales</taxon>
        <taxon>Poaceae</taxon>
        <taxon>BOP clade</taxon>
        <taxon>Oryzoideae</taxon>
        <taxon>Oryzeae</taxon>
        <taxon>Oryzinae</taxon>
        <taxon>Oryza</taxon>
        <taxon>Oryza sativa</taxon>
    </lineage>
</organism>